<accession>E4VP07</accession>
<accession>E4VP35</accession>
<dbReference type="EMBL" id="EF442055">
    <property type="protein sequence ID" value="ABR20120.1"/>
    <property type="molecule type" value="mRNA"/>
</dbReference>
<dbReference type="EMBL" id="EF445077">
    <property type="protein sequence ID" value="ABR21052.1"/>
    <property type="molecule type" value="mRNA"/>
</dbReference>
<dbReference type="SMR" id="E4VP07"/>
<dbReference type="GO" id="GO:0005576">
    <property type="term" value="C:extracellular region"/>
    <property type="evidence" value="ECO:0007669"/>
    <property type="project" value="UniProtKB-SubCell"/>
</dbReference>
<dbReference type="GO" id="GO:0016020">
    <property type="term" value="C:membrane"/>
    <property type="evidence" value="ECO:0007669"/>
    <property type="project" value="UniProtKB-KW"/>
</dbReference>
<dbReference type="GO" id="GO:0044218">
    <property type="term" value="C:other organism cell membrane"/>
    <property type="evidence" value="ECO:0007669"/>
    <property type="project" value="UniProtKB-KW"/>
</dbReference>
<dbReference type="GO" id="GO:0090729">
    <property type="term" value="F:toxin activity"/>
    <property type="evidence" value="ECO:0007669"/>
    <property type="project" value="UniProtKB-KW"/>
</dbReference>
<dbReference type="GO" id="GO:0042742">
    <property type="term" value="P:defense response to bacterium"/>
    <property type="evidence" value="ECO:0007669"/>
    <property type="project" value="UniProtKB-KW"/>
</dbReference>
<dbReference type="GO" id="GO:0050832">
    <property type="term" value="P:defense response to fungus"/>
    <property type="evidence" value="ECO:0007669"/>
    <property type="project" value="UniProtKB-KW"/>
</dbReference>
<dbReference type="GO" id="GO:0031640">
    <property type="term" value="P:killing of cells of another organism"/>
    <property type="evidence" value="ECO:0007669"/>
    <property type="project" value="UniProtKB-KW"/>
</dbReference>
<protein>
    <recommendedName>
        <fullName>Venom antimicrobial peptide-6</fullName>
    </recommendedName>
    <alternativeName>
        <fullName>MeAMP-like toxin</fullName>
    </alternativeName>
    <alternativeName>
        <fullName>Meucin-13</fullName>
    </alternativeName>
    <alternativeName>
        <fullName>Non-disulfide bridged protein family 5</fullName>
        <shortName>NDBP-5</shortName>
    </alternativeName>
    <alternativeName>
        <fullName evidence="3">Non-disulfide-bridged peptide 4.6</fullName>
        <shortName evidence="3">NDBP-4.6</shortName>
    </alternativeName>
    <alternativeName>
        <fullName>VAMP-2</fullName>
    </alternativeName>
</protein>
<evidence type="ECO:0000250" key="1"/>
<evidence type="ECO:0000269" key="2">
    <source>
    </source>
</evidence>
<evidence type="ECO:0000303" key="3">
    <source>
    </source>
</evidence>
<evidence type="ECO:0000305" key="4"/>
<comment type="function">
    <text evidence="2">Amphipathic peptide that exhibits extensive cytolytic activities against both prokaryotic and eukaryotic cells. Is more potent against Gram-positive bacteria (lethal concentration (LC)=0.25-2.9 uM) than against Gram-negative bacteria (LC=6.2-&gt;50 uM), and fungi ((LC)=14.1-&gt;50 uM). Shows hemolytic activity against rabbit erythrocytes (37.7% of inhibition at 6.25 uM) and cytolysis against rat dorsal root ganglions. In vivo, intravenous injection into mice tail provokes uncomfortable symptoms with a death rate of 12.5%.</text>
</comment>
<comment type="subcellular location">
    <subcellularLocation>
        <location evidence="1">Secreted</location>
    </subcellularLocation>
    <subcellularLocation>
        <location evidence="1">Target cell membrane</location>
    </subcellularLocation>
    <text evidence="1">Forms a helical membrane channel in the prey.</text>
</comment>
<comment type="tissue specificity">
    <text>Expressed by the venom gland.</text>
</comment>
<comment type="similarity">
    <text evidence="4">Belongs to the non-disulfide-bridged peptide (NDBP) superfamily. Short antimicrobial peptide (group 4) family.</text>
</comment>
<feature type="signal peptide" evidence="1">
    <location>
        <begin position="1"/>
        <end position="23"/>
    </location>
</feature>
<feature type="peptide" id="PRO_0000418791" description="Venom antimicrobial peptide-6">
    <location>
        <begin position="24"/>
        <end position="36"/>
    </location>
</feature>
<feature type="propeptide" id="PRO_0000418792" evidence="1">
    <location>
        <begin position="40"/>
        <end position="70"/>
    </location>
</feature>
<feature type="modified residue" description="Phenylalanine amide" evidence="1">
    <location>
        <position position="36"/>
    </location>
</feature>
<feature type="sequence conflict" description="In Ref. 2; no nucleotide entry." evidence="4" ref="2">
    <original>IF</original>
    <variation>FI</variation>
    <location>
        <begin position="24"/>
        <end position="25"/>
    </location>
</feature>
<feature type="sequence conflict" description="In Ref. 2; no nucleotide entry." evidence="4" ref="2">
    <original>I</original>
    <variation>V</variation>
    <location>
        <position position="28"/>
    </location>
</feature>
<feature type="sequence conflict" description="In Ref. 2; no nucleotide entry." evidence="4" ref="2">
    <original>D</original>
    <variation>I</variation>
    <location>
        <position position="52"/>
    </location>
</feature>
<organism>
    <name type="scientific">Mesobuthus eupeus</name>
    <name type="common">Lesser Asian scorpion</name>
    <name type="synonym">Buthus eupeus</name>
    <dbReference type="NCBI Taxonomy" id="34648"/>
    <lineage>
        <taxon>Eukaryota</taxon>
        <taxon>Metazoa</taxon>
        <taxon>Ecdysozoa</taxon>
        <taxon>Arthropoda</taxon>
        <taxon>Chelicerata</taxon>
        <taxon>Arachnida</taxon>
        <taxon>Scorpiones</taxon>
        <taxon>Buthida</taxon>
        <taxon>Buthoidea</taxon>
        <taxon>Buthidae</taxon>
        <taxon>Mesobuthus</taxon>
    </lineage>
</organism>
<proteinExistence type="evidence at protein level"/>
<sequence length="70" mass="7985">MKSQTFFLLFLVVFLLAITQSEAIFGAIAGLLKNIFGKRSLRDMDTMKYLYDPSLSAADLKTLQKLMENY</sequence>
<keyword id="KW-0027">Amidation</keyword>
<keyword id="KW-0044">Antibiotic</keyword>
<keyword id="KW-0929">Antimicrobial</keyword>
<keyword id="KW-0165">Cleavage on pair of basic residues</keyword>
<keyword id="KW-0204">Cytolysis</keyword>
<keyword id="KW-0295">Fungicide</keyword>
<keyword id="KW-0354">Hemolysis</keyword>
<keyword id="KW-0472">Membrane</keyword>
<keyword id="KW-0964">Secreted</keyword>
<keyword id="KW-0732">Signal</keyword>
<keyword id="KW-1052">Target cell membrane</keyword>
<keyword id="KW-1053">Target membrane</keyword>
<keyword id="KW-0800">Toxin</keyword>
<keyword id="KW-0812">Transmembrane</keyword>
<name>NDB46_MESEU</name>
<reference key="1">
    <citation type="journal article" date="2009" name="FASEB J.">
        <title>Structural and functional characterization of two genetically related meucin peptides highlights evolutionary divergence and convergence in antimicrobial peptides.</title>
        <authorList>
            <person name="Gao B."/>
            <person name="Sherman P."/>
            <person name="Luo L."/>
            <person name="Bowie J."/>
            <person name="Zhu S."/>
        </authorList>
    </citation>
    <scope>NUCLEOTIDE SEQUENCE [MRNA]</scope>
    <scope>FUNCTION</scope>
    <scope>CIRCULAR DICHROISM ANALYSIS</scope>
    <scope>STRUCTURE BY NMR</scope>
    <source>
        <tissue>Venom gland</tissue>
    </source>
</reference>
<reference key="2">
    <citation type="journal article" date="2013" name="Iran. Red Crescent Med. J.">
        <title>Sequence characterization of cDNA sequence of encoding of an antimicrobial peptide with no disulfide bridge from the Iranian Mesobuthus eupeus venomous glands.</title>
        <authorList>
            <person name="Farajzadeh-Sheikh A."/>
            <person name="Jolodar A."/>
            <person name="Ghaemmaghami S."/>
        </authorList>
    </citation>
    <scope>NUCLEOTIDE SEQUENCE [MRNA]</scope>
    <source>
        <tissue>Venom gland</tissue>
    </source>
</reference>
<reference key="3">
    <citation type="journal article" date="2014" name="Peptides">
        <title>Scorpion venom peptides with no disulfide bridges: a review.</title>
        <authorList>
            <person name="Almaaytah A."/>
            <person name="Albalas Q."/>
        </authorList>
    </citation>
    <scope>NOMENCLATURE</scope>
</reference>